<evidence type="ECO:0000250" key="1"/>
<evidence type="ECO:0000255" key="2"/>
<evidence type="ECO:0000305" key="3"/>
<gene>
    <name type="primary">ndhF</name>
    <name type="ORF">PA165</name>
</gene>
<comment type="function">
    <text evidence="1">NDH shuttles electrons from NAD(P)H:plastoquinone, via FMN and iron-sulfur (Fe-S) centers, to quinones in the photosynthetic chain and possibly in a chloroplast respiratory chain. The immediate electron acceptor for the enzyme in this species is believed to be plastoquinone. Couples the redox reaction to proton translocation, and thus conserves the redox energy in a proton gradient (By similarity).</text>
</comment>
<comment type="catalytic activity">
    <reaction>
        <text>a plastoquinone + NADH + (n+1) H(+)(in) = a plastoquinol + NAD(+) + n H(+)(out)</text>
        <dbReference type="Rhea" id="RHEA:42608"/>
        <dbReference type="Rhea" id="RHEA-COMP:9561"/>
        <dbReference type="Rhea" id="RHEA-COMP:9562"/>
        <dbReference type="ChEBI" id="CHEBI:15378"/>
        <dbReference type="ChEBI" id="CHEBI:17757"/>
        <dbReference type="ChEBI" id="CHEBI:57540"/>
        <dbReference type="ChEBI" id="CHEBI:57945"/>
        <dbReference type="ChEBI" id="CHEBI:62192"/>
    </reaction>
</comment>
<comment type="catalytic activity">
    <reaction>
        <text>a plastoquinone + NADPH + (n+1) H(+)(in) = a plastoquinol + NADP(+) + n H(+)(out)</text>
        <dbReference type="Rhea" id="RHEA:42612"/>
        <dbReference type="Rhea" id="RHEA-COMP:9561"/>
        <dbReference type="Rhea" id="RHEA-COMP:9562"/>
        <dbReference type="ChEBI" id="CHEBI:15378"/>
        <dbReference type="ChEBI" id="CHEBI:17757"/>
        <dbReference type="ChEBI" id="CHEBI:57783"/>
        <dbReference type="ChEBI" id="CHEBI:58349"/>
        <dbReference type="ChEBI" id="CHEBI:62192"/>
    </reaction>
</comment>
<comment type="subunit">
    <text evidence="1">NDH is composed of at least 16 different subunits, 5 of which are encoded in the nucleus.</text>
</comment>
<comment type="subcellular location">
    <subcellularLocation>
        <location evidence="1">Plastid</location>
        <location evidence="1">Chloroplast thylakoid membrane</location>
        <topology evidence="1">Multi-pass membrane protein</topology>
    </subcellularLocation>
</comment>
<comment type="similarity">
    <text evidence="3">Belongs to the complex I subunit 5 family.</text>
</comment>
<feature type="chain" id="PRO_0000118198" description="NAD(P)H-quinone oxidoreductase subunit 5, chloroplastic">
    <location>
        <begin position="1"/>
        <end position="734"/>
    </location>
</feature>
<feature type="transmembrane region" description="Helical" evidence="2">
    <location>
        <begin position="9"/>
        <end position="29"/>
    </location>
</feature>
<feature type="transmembrane region" description="Helical" evidence="2">
    <location>
        <begin position="39"/>
        <end position="59"/>
    </location>
</feature>
<feature type="transmembrane region" description="Helical" evidence="2">
    <location>
        <begin position="89"/>
        <end position="109"/>
    </location>
</feature>
<feature type="transmembrane region" description="Helical" evidence="2">
    <location>
        <begin position="125"/>
        <end position="145"/>
    </location>
</feature>
<feature type="transmembrane region" description="Helical" evidence="2">
    <location>
        <begin position="147"/>
        <end position="167"/>
    </location>
</feature>
<feature type="transmembrane region" description="Helical" evidence="2">
    <location>
        <begin position="185"/>
        <end position="205"/>
    </location>
</feature>
<feature type="transmembrane region" description="Helical" evidence="2">
    <location>
        <begin position="224"/>
        <end position="244"/>
    </location>
</feature>
<feature type="transmembrane region" description="Helical" evidence="2">
    <location>
        <begin position="258"/>
        <end position="278"/>
    </location>
</feature>
<feature type="transmembrane region" description="Helical" evidence="2">
    <location>
        <begin position="280"/>
        <end position="300"/>
    </location>
</feature>
<feature type="transmembrane region" description="Helical" evidence="2">
    <location>
        <begin position="327"/>
        <end position="347"/>
    </location>
</feature>
<feature type="transmembrane region" description="Helical" evidence="2">
    <location>
        <begin position="354"/>
        <end position="374"/>
    </location>
</feature>
<feature type="transmembrane region" description="Helical" evidence="2">
    <location>
        <begin position="396"/>
        <end position="416"/>
    </location>
</feature>
<feature type="transmembrane region" description="Helical" evidence="2">
    <location>
        <begin position="425"/>
        <end position="445"/>
    </location>
</feature>
<feature type="transmembrane region" description="Helical" evidence="2">
    <location>
        <begin position="542"/>
        <end position="562"/>
    </location>
</feature>
<feature type="transmembrane region" description="Helical" evidence="2">
    <location>
        <begin position="605"/>
        <end position="625"/>
    </location>
</feature>
<feature type="transmembrane region" description="Helical" evidence="2">
    <location>
        <begin position="714"/>
        <end position="734"/>
    </location>
</feature>
<protein>
    <recommendedName>
        <fullName>NAD(P)H-quinone oxidoreductase subunit 5, chloroplastic</fullName>
        <ecNumber>7.1.1.-</ecNumber>
    </recommendedName>
    <alternativeName>
        <fullName>NAD(P)H dehydrogenase subunit 5</fullName>
    </alternativeName>
    <alternativeName>
        <fullName>NADH-plastoquinone oxidoreductase subunit 5</fullName>
    </alternativeName>
</protein>
<name>NU5C_ORYSA</name>
<proteinExistence type="inferred from homology"/>
<sequence length="734" mass="82527">MEHTYQYAWVIPLLPLPVIMSMGFGLFLVPTATKNLRRIWAFPSVLLLSIAMVFSVHLSIQQINGSSIYQYLWSWTVNNDFSLEFGYLIDPLTSIMLILITTVGILVLIYSDDYMSHDEGYLRFFVYISFFNTSMLGLVTSSNLIQIYFFWELVGMCSYLLIGFWFTRPIAASACQKAFVTNRVGDFGLLLGILGFFWITGSLEFRDLFKIANNWIPNNEINSLLTILCAFLLFLGAVAKSAQFPLHVWLPDAMEGPTPISALIHAATMVAAGIFLIARLLPLFISLPLIMSFISLIGTLTLFLGATLALAQRDIKRSLAYSTMSQLGYMMLALGIGSYQAALFHLITHAYSKALLFLGSGSVIHSMEPLVGYSPDKSQNMVLMGGLRKYIPITRTCFLWGTLSLCGIPPLACFWSKDEILSNSWLYSPFFGIIASFTAGLTAFYMFRIYLLTFDGYLRVHFQNYSSTKEDSLYSISLWGKRISKGVNRDFVLSTAKSGVSFFSQNLSKIHVNTGNRIGSFSTSLGTKNTFVYPHEPGNTMLFPLLILLLCTLFIGSIGIHFDNEIGELTILSKWLTPSINFFQESSNSSINSYEFITNAISSVSLAIFGLFIAYMFYGSAYSFFQNLDLINSFVKGGPKKYFFHQLKKKIYSWSYNRGYIDIFYTRTFTLGIRGLTELTQFFDKGVIDGITNGVGLASFCIGEEIKYVGGGRISSYLFFFLCYVSVFLFFFLS</sequence>
<organism>
    <name type="scientific">Oryza sativa</name>
    <name type="common">Rice</name>
    <dbReference type="NCBI Taxonomy" id="4530"/>
    <lineage>
        <taxon>Eukaryota</taxon>
        <taxon>Viridiplantae</taxon>
        <taxon>Streptophyta</taxon>
        <taxon>Embryophyta</taxon>
        <taxon>Tracheophyta</taxon>
        <taxon>Spermatophyta</taxon>
        <taxon>Magnoliopsida</taxon>
        <taxon>Liliopsida</taxon>
        <taxon>Poales</taxon>
        <taxon>Poaceae</taxon>
        <taxon>BOP clade</taxon>
        <taxon>Oryzoideae</taxon>
        <taxon>Oryzeae</taxon>
        <taxon>Oryzinae</taxon>
        <taxon>Oryza</taxon>
    </lineage>
</organism>
<keyword id="KW-0150">Chloroplast</keyword>
<keyword id="KW-0472">Membrane</keyword>
<keyword id="KW-0520">NAD</keyword>
<keyword id="KW-0521">NADP</keyword>
<keyword id="KW-0934">Plastid</keyword>
<keyword id="KW-0618">Plastoquinone</keyword>
<keyword id="KW-0874">Quinone</keyword>
<keyword id="KW-0793">Thylakoid</keyword>
<keyword id="KW-1278">Translocase</keyword>
<keyword id="KW-0812">Transmembrane</keyword>
<keyword id="KW-1133">Transmembrane helix</keyword>
<keyword id="KW-0813">Transport</keyword>
<accession>P0C326</accession>
<accession>P12129</accession>
<accession>Q6QXX7</accession>
<accession>Q6QY40</accession>
<reference key="1">
    <citation type="journal article" date="2004" name="Plant Physiol.">
        <title>A comparison of rice chloroplast genomes.</title>
        <authorList>
            <person name="Tang J."/>
            <person name="Xia H."/>
            <person name="Cao M."/>
            <person name="Zhang X."/>
            <person name="Zeng W."/>
            <person name="Hu S."/>
            <person name="Tong W."/>
            <person name="Wang J."/>
            <person name="Wang J."/>
            <person name="Yu J."/>
            <person name="Yang H."/>
            <person name="Zhu L."/>
        </authorList>
    </citation>
    <scope>NUCLEOTIDE SEQUENCE [LARGE SCALE GENOMIC DNA]</scope>
    <source>
        <strain>cv. PA64s</strain>
    </source>
</reference>
<dbReference type="EC" id="7.1.1.-"/>
<dbReference type="EMBL" id="AY522331">
    <property type="protein sequence ID" value="AAS46217.1"/>
    <property type="molecule type" value="Genomic_DNA"/>
</dbReference>
<dbReference type="RefSeq" id="YP_009305359.1">
    <property type="nucleotide sequence ID" value="NC_031333.1"/>
</dbReference>
<dbReference type="SMR" id="P0C326"/>
<dbReference type="GeneID" id="29141434"/>
<dbReference type="GO" id="GO:0009535">
    <property type="term" value="C:chloroplast thylakoid membrane"/>
    <property type="evidence" value="ECO:0007669"/>
    <property type="project" value="UniProtKB-SubCell"/>
</dbReference>
<dbReference type="GO" id="GO:0009536">
    <property type="term" value="C:plastid"/>
    <property type="evidence" value="ECO:0000305"/>
    <property type="project" value="Gramene"/>
</dbReference>
<dbReference type="GO" id="GO:0008137">
    <property type="term" value="F:NADH dehydrogenase (ubiquinone) activity"/>
    <property type="evidence" value="ECO:0007669"/>
    <property type="project" value="InterPro"/>
</dbReference>
<dbReference type="GO" id="GO:0048038">
    <property type="term" value="F:quinone binding"/>
    <property type="evidence" value="ECO:0007669"/>
    <property type="project" value="UniProtKB-KW"/>
</dbReference>
<dbReference type="GO" id="GO:0042773">
    <property type="term" value="P:ATP synthesis coupled electron transport"/>
    <property type="evidence" value="ECO:0007669"/>
    <property type="project" value="InterPro"/>
</dbReference>
<dbReference type="GO" id="GO:0015990">
    <property type="term" value="P:electron transport coupled proton transport"/>
    <property type="evidence" value="ECO:0007669"/>
    <property type="project" value="TreeGrafter"/>
</dbReference>
<dbReference type="Gene3D" id="1.20.5.2700">
    <property type="match status" value="1"/>
</dbReference>
<dbReference type="InterPro" id="IPR002128">
    <property type="entry name" value="NADH_UbQ_OxRdtase_chlpt_su5_C"/>
</dbReference>
<dbReference type="InterPro" id="IPR018393">
    <property type="entry name" value="NADHpl_OxRdtase_5_subgr"/>
</dbReference>
<dbReference type="InterPro" id="IPR001750">
    <property type="entry name" value="ND/Mrp_TM"/>
</dbReference>
<dbReference type="InterPro" id="IPR003945">
    <property type="entry name" value="NU5C-like"/>
</dbReference>
<dbReference type="InterPro" id="IPR001516">
    <property type="entry name" value="Proton_antipo_N"/>
</dbReference>
<dbReference type="NCBIfam" id="TIGR01974">
    <property type="entry name" value="NDH_I_L"/>
    <property type="match status" value="1"/>
</dbReference>
<dbReference type="NCBIfam" id="NF005141">
    <property type="entry name" value="PRK06590.1"/>
    <property type="match status" value="1"/>
</dbReference>
<dbReference type="PANTHER" id="PTHR42829">
    <property type="entry name" value="NADH-UBIQUINONE OXIDOREDUCTASE CHAIN 5"/>
    <property type="match status" value="1"/>
</dbReference>
<dbReference type="PANTHER" id="PTHR42829:SF2">
    <property type="entry name" value="NADH-UBIQUINONE OXIDOREDUCTASE CHAIN 5"/>
    <property type="match status" value="1"/>
</dbReference>
<dbReference type="Pfam" id="PF01010">
    <property type="entry name" value="Proton_antipo_C"/>
    <property type="match status" value="1"/>
</dbReference>
<dbReference type="Pfam" id="PF00361">
    <property type="entry name" value="Proton_antipo_M"/>
    <property type="match status" value="1"/>
</dbReference>
<dbReference type="Pfam" id="PF00662">
    <property type="entry name" value="Proton_antipo_N"/>
    <property type="match status" value="1"/>
</dbReference>
<dbReference type="PRINTS" id="PR01434">
    <property type="entry name" value="NADHDHGNASE5"/>
</dbReference>
<dbReference type="PRINTS" id="PR01435">
    <property type="entry name" value="NPOXDRDTASE5"/>
</dbReference>
<geneLocation type="chloroplast"/>